<organism>
    <name type="scientific">Pseudomonas aeruginosa (strain LESB58)</name>
    <dbReference type="NCBI Taxonomy" id="557722"/>
    <lineage>
        <taxon>Bacteria</taxon>
        <taxon>Pseudomonadati</taxon>
        <taxon>Pseudomonadota</taxon>
        <taxon>Gammaproteobacteria</taxon>
        <taxon>Pseudomonadales</taxon>
        <taxon>Pseudomonadaceae</taxon>
        <taxon>Pseudomonas</taxon>
    </lineage>
</organism>
<dbReference type="EC" id="2.3.2.6" evidence="1"/>
<dbReference type="EMBL" id="FM209186">
    <property type="protein sequence ID" value="CAW27214.1"/>
    <property type="molecule type" value="Genomic_DNA"/>
</dbReference>
<dbReference type="RefSeq" id="WP_003108768.1">
    <property type="nucleotide sequence ID" value="NC_011770.1"/>
</dbReference>
<dbReference type="SMR" id="B7UV24"/>
<dbReference type="KEGG" id="pag:PLES_24881"/>
<dbReference type="HOGENOM" id="CLU_075045_0_0_6"/>
<dbReference type="GO" id="GO:0005737">
    <property type="term" value="C:cytoplasm"/>
    <property type="evidence" value="ECO:0007669"/>
    <property type="project" value="UniProtKB-SubCell"/>
</dbReference>
<dbReference type="GO" id="GO:0008914">
    <property type="term" value="F:leucyl-tRNA--protein transferase activity"/>
    <property type="evidence" value="ECO:0007669"/>
    <property type="project" value="UniProtKB-UniRule"/>
</dbReference>
<dbReference type="GO" id="GO:0030163">
    <property type="term" value="P:protein catabolic process"/>
    <property type="evidence" value="ECO:0007669"/>
    <property type="project" value="UniProtKB-UniRule"/>
</dbReference>
<dbReference type="FunFam" id="3.30.70.3550:FF:000001">
    <property type="entry name" value="Leucyl/phenylalanyl-tRNA--protein transferase"/>
    <property type="match status" value="1"/>
</dbReference>
<dbReference type="FunFam" id="3.40.630.70:FF:000003">
    <property type="entry name" value="Leucyl/phenylalanyl-tRNA--protein transferase"/>
    <property type="match status" value="1"/>
</dbReference>
<dbReference type="Gene3D" id="3.40.630.70">
    <property type="entry name" value="Leucyl/phenylalanyl-tRNA-protein transferase, C-terminal domain"/>
    <property type="match status" value="1"/>
</dbReference>
<dbReference type="Gene3D" id="3.30.70.3550">
    <property type="entry name" value="Leucyl/phenylalanyl-tRNA-protein transferase, N-terminal domain"/>
    <property type="match status" value="1"/>
</dbReference>
<dbReference type="HAMAP" id="MF_00688">
    <property type="entry name" value="Leu_Phe_trans"/>
    <property type="match status" value="1"/>
</dbReference>
<dbReference type="InterPro" id="IPR016181">
    <property type="entry name" value="Acyl_CoA_acyltransferase"/>
</dbReference>
<dbReference type="InterPro" id="IPR004616">
    <property type="entry name" value="Leu/Phe-tRNA_Trfase"/>
</dbReference>
<dbReference type="InterPro" id="IPR042203">
    <property type="entry name" value="Leu/Phe-tRNA_Trfase_C"/>
</dbReference>
<dbReference type="InterPro" id="IPR042221">
    <property type="entry name" value="Leu/Phe-tRNA_Trfase_N"/>
</dbReference>
<dbReference type="NCBIfam" id="TIGR00667">
    <property type="entry name" value="aat"/>
    <property type="match status" value="1"/>
</dbReference>
<dbReference type="PANTHER" id="PTHR30098">
    <property type="entry name" value="LEUCYL/PHENYLALANYL-TRNA--PROTEIN TRANSFERASE"/>
    <property type="match status" value="1"/>
</dbReference>
<dbReference type="PANTHER" id="PTHR30098:SF2">
    <property type="entry name" value="LEUCYL_PHENYLALANYL-TRNA--PROTEIN TRANSFERASE"/>
    <property type="match status" value="1"/>
</dbReference>
<dbReference type="Pfam" id="PF03588">
    <property type="entry name" value="Leu_Phe_trans"/>
    <property type="match status" value="1"/>
</dbReference>
<dbReference type="SUPFAM" id="SSF55729">
    <property type="entry name" value="Acyl-CoA N-acyltransferases (Nat)"/>
    <property type="match status" value="1"/>
</dbReference>
<reference key="1">
    <citation type="journal article" date="2009" name="Genome Res.">
        <title>Newly introduced genomic prophage islands are critical determinants of in vivo competitiveness in the Liverpool epidemic strain of Pseudomonas aeruginosa.</title>
        <authorList>
            <person name="Winstanley C."/>
            <person name="Langille M.G.I."/>
            <person name="Fothergill J.L."/>
            <person name="Kukavica-Ibrulj I."/>
            <person name="Paradis-Bleau C."/>
            <person name="Sanschagrin F."/>
            <person name="Thomson N.R."/>
            <person name="Winsor G.L."/>
            <person name="Quail M.A."/>
            <person name="Lennard N."/>
            <person name="Bignell A."/>
            <person name="Clarke L."/>
            <person name="Seeger K."/>
            <person name="Saunders D."/>
            <person name="Harris D."/>
            <person name="Parkhill J."/>
            <person name="Hancock R.E.W."/>
            <person name="Brinkman F.S.L."/>
            <person name="Levesque R.C."/>
        </authorList>
    </citation>
    <scope>NUCLEOTIDE SEQUENCE [LARGE SCALE GENOMIC DNA]</scope>
    <source>
        <strain>LESB58</strain>
    </source>
</reference>
<keyword id="KW-0012">Acyltransferase</keyword>
<keyword id="KW-0963">Cytoplasm</keyword>
<keyword id="KW-0808">Transferase</keyword>
<proteinExistence type="inferred from homology"/>
<comment type="function">
    <text evidence="1">Functions in the N-end rule pathway of protein degradation where it conjugates Leu, Phe and, less efficiently, Met from aminoacyl-tRNAs to the N-termini of proteins containing an N-terminal arginine or lysine.</text>
</comment>
<comment type="catalytic activity">
    <reaction evidence="1">
        <text>N-terminal L-lysyl-[protein] + L-leucyl-tRNA(Leu) = N-terminal L-leucyl-L-lysyl-[protein] + tRNA(Leu) + H(+)</text>
        <dbReference type="Rhea" id="RHEA:12340"/>
        <dbReference type="Rhea" id="RHEA-COMP:9613"/>
        <dbReference type="Rhea" id="RHEA-COMP:9622"/>
        <dbReference type="Rhea" id="RHEA-COMP:12670"/>
        <dbReference type="Rhea" id="RHEA-COMP:12671"/>
        <dbReference type="ChEBI" id="CHEBI:15378"/>
        <dbReference type="ChEBI" id="CHEBI:65249"/>
        <dbReference type="ChEBI" id="CHEBI:78442"/>
        <dbReference type="ChEBI" id="CHEBI:78494"/>
        <dbReference type="ChEBI" id="CHEBI:133043"/>
        <dbReference type="EC" id="2.3.2.6"/>
    </reaction>
</comment>
<comment type="catalytic activity">
    <reaction evidence="1">
        <text>N-terminal L-arginyl-[protein] + L-leucyl-tRNA(Leu) = N-terminal L-leucyl-L-arginyl-[protein] + tRNA(Leu) + H(+)</text>
        <dbReference type="Rhea" id="RHEA:50416"/>
        <dbReference type="Rhea" id="RHEA-COMP:9613"/>
        <dbReference type="Rhea" id="RHEA-COMP:9622"/>
        <dbReference type="Rhea" id="RHEA-COMP:12672"/>
        <dbReference type="Rhea" id="RHEA-COMP:12673"/>
        <dbReference type="ChEBI" id="CHEBI:15378"/>
        <dbReference type="ChEBI" id="CHEBI:64719"/>
        <dbReference type="ChEBI" id="CHEBI:78442"/>
        <dbReference type="ChEBI" id="CHEBI:78494"/>
        <dbReference type="ChEBI" id="CHEBI:133044"/>
        <dbReference type="EC" id="2.3.2.6"/>
    </reaction>
</comment>
<comment type="catalytic activity">
    <reaction evidence="1">
        <text>L-phenylalanyl-tRNA(Phe) + an N-terminal L-alpha-aminoacyl-[protein] = an N-terminal L-phenylalanyl-L-alpha-aminoacyl-[protein] + tRNA(Phe)</text>
        <dbReference type="Rhea" id="RHEA:43632"/>
        <dbReference type="Rhea" id="RHEA-COMP:9668"/>
        <dbReference type="Rhea" id="RHEA-COMP:9699"/>
        <dbReference type="Rhea" id="RHEA-COMP:10636"/>
        <dbReference type="Rhea" id="RHEA-COMP:10637"/>
        <dbReference type="ChEBI" id="CHEBI:78442"/>
        <dbReference type="ChEBI" id="CHEBI:78531"/>
        <dbReference type="ChEBI" id="CHEBI:78597"/>
        <dbReference type="ChEBI" id="CHEBI:83561"/>
        <dbReference type="EC" id="2.3.2.6"/>
    </reaction>
</comment>
<comment type="subcellular location">
    <subcellularLocation>
        <location evidence="1">Cytoplasm</location>
    </subcellularLocation>
</comment>
<comment type="similarity">
    <text evidence="1">Belongs to the L/F-transferase family.</text>
</comment>
<name>LFTR_PSEA8</name>
<feature type="chain" id="PRO_1000131938" description="Leucyl/phenylalanyl-tRNA--protein transferase">
    <location>
        <begin position="1"/>
        <end position="226"/>
    </location>
</feature>
<sequence length="226" mass="25827">MLTWLSRTDFDFPPLDKALQEPNGLLAAGGDLNPQRLVAAYRHGCFPWYQDGQPILWWSPDPRTVLFPDELHVSRSLAKCLRQQRFEVTFNRDFRAVIQACAAPRDYADGTWITTPMQLAYQELHLRGIAHSVEVWQERQLVGGLYGLAMGRLFFGESMFSRADNASKVGFVTLVRHLRDAGFVLIDCQMPTRHLHSLGARAISRGEFADYLQRYRDQPPTGDLDF</sequence>
<evidence type="ECO:0000255" key="1">
    <source>
        <dbReference type="HAMAP-Rule" id="MF_00688"/>
    </source>
</evidence>
<accession>B7UV24</accession>
<gene>
    <name evidence="1" type="primary">aat</name>
    <name type="ordered locus">PLES_24881</name>
</gene>
<protein>
    <recommendedName>
        <fullName evidence="1">Leucyl/phenylalanyl-tRNA--protein transferase</fullName>
        <ecNumber evidence="1">2.3.2.6</ecNumber>
    </recommendedName>
    <alternativeName>
        <fullName evidence="1">L/F-transferase</fullName>
    </alternativeName>
    <alternativeName>
        <fullName evidence="1">Leucyltransferase</fullName>
    </alternativeName>
    <alternativeName>
        <fullName evidence="1">Phenyalanyltransferase</fullName>
    </alternativeName>
</protein>